<sequence length="368" mass="42863">MYDWFSEMRKKDPVYYDGNIWQVFSYRYTKEVLNNFSKFSSDLTGYHERLEDLRNGKIRFDIPTRYTMLTSDPPLHDELRSMSADIFSPQKLQTLETFIRETTRSLLDSIDPREDDIVKKLAVPLPIIVISKILGLPIEDKEKFKEWSDLVAFRLGKPGEIFELGKKYLELIGYVKDHLNSGTEVVSRVVNSNLSDIEKLGYIILLLIAGNETTTNLISNSVIDFTRFNLWQRIREENLYLKAIEEALRYSPPVMRTVRKTKERVKLGDQTIEEGEYVRVWIASANRDEEVFHDGEKFIPDRNPNPHLSFGSGIHLCLGAPLARLEARIAIEEFSKRFRHIEILDTEKVPNEVLNGYKRLVVRLKSNE</sequence>
<name>CP119_SULAC</name>
<reference key="1">
    <citation type="journal article" date="1996" name="FEBS Lett.">
        <title>Cloning of a potential cytochrome P450 from the archaeon Sulfolobus solfataricus.</title>
        <authorList>
            <person name="Wright R.L."/>
            <person name="Harris K."/>
            <person name="Solow B."/>
            <person name="White R.H."/>
            <person name="Kennelly R.H."/>
        </authorList>
    </citation>
    <scope>NUCLEOTIDE SEQUENCE [GENOMIC DNA]</scope>
</reference>
<reference key="2">
    <citation type="journal article" date="2005" name="J. Bacteriol.">
        <title>The genome of Sulfolobus acidocaldarius, a model organism of the Crenarchaeota.</title>
        <authorList>
            <person name="Chen L."/>
            <person name="Bruegger K."/>
            <person name="Skovgaard M."/>
            <person name="Redder P."/>
            <person name="She Q."/>
            <person name="Torarinsson E."/>
            <person name="Greve B."/>
            <person name="Awayez M."/>
            <person name="Zibat A."/>
            <person name="Klenk H.-P."/>
            <person name="Garrett R.A."/>
        </authorList>
    </citation>
    <scope>NUCLEOTIDE SEQUENCE [LARGE SCALE GENOMIC DNA]</scope>
    <source>
        <strain>ATCC 33909 / DSM 639 / JCM 8929 / NBRC 15157 / NCIMB 11770</strain>
    </source>
</reference>
<reference key="3">
    <citation type="journal article" date="1998" name="Biochem. Biophys. Res. Commun.">
        <title>Characterization of a cytochrome P450 from the acidothermophilic archaea Sulfolobus solfataricus.</title>
        <authorList>
            <person name="McLean M.A."/>
            <person name="Maves S.A."/>
            <person name="Weiss K.E."/>
            <person name="Krepich S."/>
            <person name="Sligar S.G."/>
        </authorList>
    </citation>
    <scope>CHARACTERIZATION</scope>
</reference>
<reference key="4">
    <citation type="journal article" date="2000" name="J. Biol. Chem.">
        <title>The active site of the thermophilic CYP119 from Sulfolobus solfataricus.</title>
        <authorList>
            <person name="Koo L.S."/>
            <person name="Tschirret-Guth R.A."/>
            <person name="Straub W.E."/>
            <person name="Moenne-Loccoz P."/>
            <person name="Loehr T.M."/>
            <person name="Ortiz de Montellano P.R."/>
        </authorList>
    </citation>
    <scope>FUNCTION</scope>
    <scope>HEME BINDING</scope>
    <scope>REACTION STEREOCHEMISTRY</scope>
    <scope>BIOPHYSICOCHEMICAL PROPERTIES</scope>
    <scope>MUTAGENESIS OF THR-213 AND THR-214</scope>
</reference>
<reference key="5">
    <citation type="journal article" date="2002" name="J. Am. Chem. Soc.">
        <title>Enhanced electron transfer and lauric acid hydroxylation by site-directed mutagenesis of CYP119.</title>
        <authorList>
            <person name="Koo L.S."/>
            <person name="Immoos C.E."/>
            <person name="Cohen M.S."/>
            <person name="Farmer P.J."/>
            <person name="Ortiz de Montellano P.R."/>
        </authorList>
    </citation>
    <scope>FUNCTION</scope>
    <scope>BIOPHYSICOCHEMICAL PROPERTIES</scope>
    <scope>MUTAGENESIS OF ASP-77 AND THR-214</scope>
</reference>
<reference key="6">
    <citation type="journal article" date="2008" name="ChemBioChem">
        <title>Characterization of the peroxidase activity of CYP119, a thermostable P450 from Sulfolobus acidocaldarius.</title>
        <authorList>
            <person name="Rabe K.S."/>
            <person name="Kiko K."/>
            <person name="Niemeyer C.M."/>
        </authorList>
    </citation>
    <scope>FUNCTION</scope>
    <scope>BIOPHYSICOCHEMICAL PROPERTIES</scope>
</reference>
<reference key="7">
    <citation type="journal article" date="2000" name="Acta Crystallogr. D">
        <title>Crystallization and preliminary X-ray diffraction analysis of a cytochrome P450 (CYP119) from Sulfolobus solfataricus.</title>
        <authorList>
            <person name="Park S.-Y."/>
            <person name="Yamane K."/>
            <person name="Adachi S."/>
            <person name="Shiro Y."/>
            <person name="Weiss K.E."/>
            <person name="Sligar S.G."/>
        </authorList>
    </citation>
    <scope>X-RAY CRYSTALLOGRAPHY (1.5 ANGSTROMS) IN COMPLEX WITH HEME</scope>
</reference>
<reference key="8">
    <citation type="journal article" date="2000" name="J. Biol. Chem.">
        <title>Crystal structure of a thermophilic cytochrome P450 from the archaeon Sulfolobus solfataricus.</title>
        <authorList>
            <person name="Yano J.K."/>
            <person name="Koo L.S."/>
            <person name="Schuller D.J."/>
            <person name="Li H."/>
            <person name="Ortiz De Montellano P.R."/>
            <person name="Poulos T.L."/>
        </authorList>
    </citation>
    <scope>X-RAY CRYSTALLOGRAPHY (1.93 ANGSTROMS) IN COMPLEX WITH HEME</scope>
</reference>
<keyword id="KW-0002">3D-structure</keyword>
<keyword id="KW-0963">Cytoplasm</keyword>
<keyword id="KW-0349">Heme</keyword>
<keyword id="KW-0408">Iron</keyword>
<keyword id="KW-0479">Metal-binding</keyword>
<keyword id="KW-0503">Monooxygenase</keyword>
<keyword id="KW-0560">Oxidoreductase</keyword>
<keyword id="KW-0575">Peroxidase</keyword>
<keyword id="KW-1185">Reference proteome</keyword>
<gene>
    <name type="primary">cyp119</name>
    <name type="ordered locus">Saci_2081</name>
</gene>
<evidence type="ECO:0000269" key="1">
    <source>
    </source>
</evidence>
<evidence type="ECO:0000269" key="2">
    <source>
    </source>
</evidence>
<evidence type="ECO:0000269" key="3">
    <source>
    </source>
</evidence>
<evidence type="ECO:0000269" key="4">
    <source>
    </source>
</evidence>
<evidence type="ECO:0000269" key="5">
    <source>
    </source>
</evidence>
<evidence type="ECO:0000305" key="6"/>
<evidence type="ECO:0000305" key="7">
    <source>
    </source>
</evidence>
<evidence type="ECO:0000305" key="8">
    <source>
    </source>
</evidence>
<evidence type="ECO:0007829" key="9">
    <source>
        <dbReference type="PDB" id="1F4T"/>
    </source>
</evidence>
<evidence type="ECO:0007829" key="10">
    <source>
        <dbReference type="PDB" id="1IO7"/>
    </source>
</evidence>
<evidence type="ECO:0007829" key="11">
    <source>
        <dbReference type="PDB" id="5BV5"/>
    </source>
</evidence>
<evidence type="ECO:0007829" key="12">
    <source>
        <dbReference type="PDB" id="7UOR"/>
    </source>
</evidence>
<proteinExistence type="evidence at protein level"/>
<dbReference type="EC" id="1.14.-.-"/>
<dbReference type="EC" id="1.11.1.7"/>
<dbReference type="EMBL" id="U51337">
    <property type="protein sequence ID" value="AAB03278.1"/>
    <property type="molecule type" value="Genomic_DNA"/>
</dbReference>
<dbReference type="EMBL" id="CP000077">
    <property type="protein sequence ID" value="AAY81375.1"/>
    <property type="molecule type" value="Genomic_DNA"/>
</dbReference>
<dbReference type="PIR" id="S71328">
    <property type="entry name" value="S71328"/>
</dbReference>
<dbReference type="RefSeq" id="WP_011278877.1">
    <property type="nucleotide sequence ID" value="NC_007181.1"/>
</dbReference>
<dbReference type="PDB" id="1F4T">
    <property type="method" value="X-ray"/>
    <property type="resolution" value="1.93 A"/>
    <property type="chains" value="A/B=1-368"/>
</dbReference>
<dbReference type="PDB" id="1F4U">
    <property type="method" value="X-ray"/>
    <property type="resolution" value="2.69 A"/>
    <property type="chains" value="A/B=1-368"/>
</dbReference>
<dbReference type="PDB" id="1IO7">
    <property type="method" value="X-ray"/>
    <property type="resolution" value="1.50 A"/>
    <property type="chains" value="A/B=1-368"/>
</dbReference>
<dbReference type="PDB" id="1IO8">
    <property type="method" value="X-ray"/>
    <property type="resolution" value="2.00 A"/>
    <property type="chains" value="A/B=1-368"/>
</dbReference>
<dbReference type="PDB" id="1IO9">
    <property type="method" value="X-ray"/>
    <property type="resolution" value="2.05 A"/>
    <property type="chains" value="A/B=1-368"/>
</dbReference>
<dbReference type="PDB" id="4TT5">
    <property type="method" value="X-ray"/>
    <property type="resolution" value="2.18 A"/>
    <property type="chains" value="A=1-368"/>
</dbReference>
<dbReference type="PDB" id="4TUV">
    <property type="method" value="X-ray"/>
    <property type="resolution" value="2.50 A"/>
    <property type="chains" value="A=1-368"/>
</dbReference>
<dbReference type="PDB" id="4WPD">
    <property type="method" value="X-ray"/>
    <property type="resolution" value="2.00 A"/>
    <property type="chains" value="A/B=1-368"/>
</dbReference>
<dbReference type="PDB" id="4WQJ">
    <property type="method" value="X-ray"/>
    <property type="resolution" value="2.70 A"/>
    <property type="chains" value="A=1-368"/>
</dbReference>
<dbReference type="PDB" id="5BV5">
    <property type="method" value="X-ray"/>
    <property type="resolution" value="2.70 A"/>
    <property type="chains" value="A/B/C/D=1-368"/>
</dbReference>
<dbReference type="PDB" id="7UOR">
    <property type="method" value="X-ray"/>
    <property type="resolution" value="3.16 A"/>
    <property type="chains" value="A/B/C/D/E/F=2-368"/>
</dbReference>
<dbReference type="PDBsum" id="1F4T"/>
<dbReference type="PDBsum" id="1F4U"/>
<dbReference type="PDBsum" id="1IO7"/>
<dbReference type="PDBsum" id="1IO8"/>
<dbReference type="PDBsum" id="1IO9"/>
<dbReference type="PDBsum" id="4TT5"/>
<dbReference type="PDBsum" id="4TUV"/>
<dbReference type="PDBsum" id="4WPD"/>
<dbReference type="PDBsum" id="4WQJ"/>
<dbReference type="PDBsum" id="5BV5"/>
<dbReference type="PDBsum" id="7UOR"/>
<dbReference type="SMR" id="Q55080"/>
<dbReference type="STRING" id="330779.Saci_2081"/>
<dbReference type="GeneID" id="14552597"/>
<dbReference type="GeneID" id="78442441"/>
<dbReference type="KEGG" id="sai:Saci_2081"/>
<dbReference type="PATRIC" id="fig|330779.12.peg.2081"/>
<dbReference type="eggNOG" id="arCOG02814">
    <property type="taxonomic scope" value="Archaea"/>
</dbReference>
<dbReference type="HOGENOM" id="CLU_033716_0_2_2"/>
<dbReference type="BRENDA" id="1.11.1.7">
    <property type="organism ID" value="6160"/>
</dbReference>
<dbReference type="EvolutionaryTrace" id="Q55080"/>
<dbReference type="Proteomes" id="UP000001018">
    <property type="component" value="Chromosome"/>
</dbReference>
<dbReference type="GO" id="GO:0005737">
    <property type="term" value="C:cytoplasm"/>
    <property type="evidence" value="ECO:0007669"/>
    <property type="project" value="UniProtKB-SubCell"/>
</dbReference>
<dbReference type="GO" id="GO:0020037">
    <property type="term" value="F:heme binding"/>
    <property type="evidence" value="ECO:0007669"/>
    <property type="project" value="InterPro"/>
</dbReference>
<dbReference type="GO" id="GO:0005506">
    <property type="term" value="F:iron ion binding"/>
    <property type="evidence" value="ECO:0007669"/>
    <property type="project" value="InterPro"/>
</dbReference>
<dbReference type="GO" id="GO:0140825">
    <property type="term" value="F:lactoperoxidase activity"/>
    <property type="evidence" value="ECO:0007669"/>
    <property type="project" value="UniProtKB-EC"/>
</dbReference>
<dbReference type="GO" id="GO:0004497">
    <property type="term" value="F:monooxygenase activity"/>
    <property type="evidence" value="ECO:0007669"/>
    <property type="project" value="UniProtKB-KW"/>
</dbReference>
<dbReference type="GO" id="GO:0016705">
    <property type="term" value="F:oxidoreductase activity, acting on paired donors, with incorporation or reduction of molecular oxygen"/>
    <property type="evidence" value="ECO:0007669"/>
    <property type="project" value="InterPro"/>
</dbReference>
<dbReference type="CDD" id="cd11032">
    <property type="entry name" value="P450_EryK-like"/>
    <property type="match status" value="1"/>
</dbReference>
<dbReference type="Gene3D" id="1.10.630.10">
    <property type="entry name" value="Cytochrome P450"/>
    <property type="match status" value="1"/>
</dbReference>
<dbReference type="InterPro" id="IPR053518">
    <property type="entry name" value="CYP450_119-like"/>
</dbReference>
<dbReference type="InterPro" id="IPR001128">
    <property type="entry name" value="Cyt_P450"/>
</dbReference>
<dbReference type="InterPro" id="IPR002397">
    <property type="entry name" value="Cyt_P450_B"/>
</dbReference>
<dbReference type="InterPro" id="IPR017972">
    <property type="entry name" value="Cyt_P450_CS"/>
</dbReference>
<dbReference type="InterPro" id="IPR036396">
    <property type="entry name" value="Cyt_P450_sf"/>
</dbReference>
<dbReference type="NCBIfam" id="NF041177">
    <property type="entry name" value="Cyp119_Thmprot"/>
    <property type="match status" value="1"/>
</dbReference>
<dbReference type="PANTHER" id="PTHR46696:SF1">
    <property type="entry name" value="CYTOCHROME P450 YJIB-RELATED"/>
    <property type="match status" value="1"/>
</dbReference>
<dbReference type="PANTHER" id="PTHR46696">
    <property type="entry name" value="P450, PUTATIVE (EUROFUNG)-RELATED"/>
    <property type="match status" value="1"/>
</dbReference>
<dbReference type="Pfam" id="PF00067">
    <property type="entry name" value="p450"/>
    <property type="match status" value="1"/>
</dbReference>
<dbReference type="PRINTS" id="PR00359">
    <property type="entry name" value="BP450"/>
</dbReference>
<dbReference type="PRINTS" id="PR00385">
    <property type="entry name" value="P450"/>
</dbReference>
<dbReference type="SUPFAM" id="SSF48264">
    <property type="entry name" value="Cytochrome P450"/>
    <property type="match status" value="1"/>
</dbReference>
<dbReference type="PROSITE" id="PS00086">
    <property type="entry name" value="CYTOCHROME_P450"/>
    <property type="match status" value="1"/>
</dbReference>
<comment type="function">
    <text evidence="1 4 5">The endogenous substrate is not known. In vitro, catalyzes the H(2)O(2)-dependent epoxidation of styrene, cis-beta-methylstyrene, and cis-stilbene with retention of stereochemistry. Is able to use cumene hydroperoxide (CHP) or tert-butyl hydroperoxide (TBHP) instead of H(2)O(2) as the electron acceptor. Can also hydroxylate fatty acids such as lauric acid.</text>
</comment>
<comment type="catalytic activity">
    <reaction>
        <text>2 a phenolic donor + H2O2 = 2 a phenolic radical donor + 2 H2O</text>
        <dbReference type="Rhea" id="RHEA:56136"/>
        <dbReference type="ChEBI" id="CHEBI:15377"/>
        <dbReference type="ChEBI" id="CHEBI:16240"/>
        <dbReference type="ChEBI" id="CHEBI:139520"/>
        <dbReference type="ChEBI" id="CHEBI:139521"/>
        <dbReference type="EC" id="1.11.1.7"/>
    </reaction>
</comment>
<comment type="cofactor">
    <cofactor>
        <name>heme</name>
        <dbReference type="ChEBI" id="CHEBI:30413"/>
    </cofactor>
    <text>Binds 1 heme group per subunit.</text>
</comment>
<comment type="biophysicochemical properties">
    <kinetics>
        <KM evidence="1 4 5">21 uM for lauric acid</KM>
        <KM evidence="1 4 5">9.2 mM for styrene</KM>
    </kinetics>
    <phDependence>
        <text evidence="1 4 5">Optimum pH is 8.5 for peroxidase activity.</text>
    </phDependence>
    <temperatureDependence>
        <text evidence="1 4 5">Optimum temperature is about 75 degrees Celsius. Activity is 10-fold greater at 75 degrees Celsius than that measured at 25 degrees Celsius. Thermostable up to 85 degrees Celsius. Thermal denaturation midpoint (Tm) is 91 degrees Celsius.</text>
    </temperatureDependence>
</comment>
<comment type="subcellular location">
    <subcellularLocation>
        <location evidence="6">Cytoplasm</location>
    </subcellularLocation>
</comment>
<comment type="similarity">
    <text evidence="6">Belongs to the cytochrome P450 family.</text>
</comment>
<comment type="caution">
    <text evidence="7 8">Was originally (PubMed:8617361) thought to originate from Sulfolobus solfataricus, but was shown (PubMed:18157853) to stem from Sulfolobus acidocaldarius. This was due to a contamination of the S.solfataricus P1 strain isolate used for the initial cloning with the S.acidocaldarius species.</text>
</comment>
<protein>
    <recommendedName>
        <fullName>Cytochrome P450 119</fullName>
        <ecNumber>1.14.-.-</ecNumber>
    </recommendedName>
    <alternativeName>
        <fullName>Peroxidase</fullName>
        <ecNumber>1.11.1.7</ecNumber>
    </alternativeName>
</protein>
<organism>
    <name type="scientific">Sulfolobus acidocaldarius (strain ATCC 33909 / DSM 639 / JCM 8929 / NBRC 15157 / NCIMB 11770)</name>
    <dbReference type="NCBI Taxonomy" id="330779"/>
    <lineage>
        <taxon>Archaea</taxon>
        <taxon>Thermoproteota</taxon>
        <taxon>Thermoprotei</taxon>
        <taxon>Sulfolobales</taxon>
        <taxon>Sulfolobaceae</taxon>
        <taxon>Sulfolobus</taxon>
    </lineage>
</organism>
<accession>Q55080</accession>
<accession>Q4J756</accession>
<feature type="chain" id="PRO_0000052237" description="Cytochrome P450 119">
    <location>
        <begin position="1"/>
        <end position="368"/>
    </location>
</feature>
<feature type="binding site" evidence="2 3">
    <location>
        <position position="76"/>
    </location>
    <ligand>
        <name>heme</name>
        <dbReference type="ChEBI" id="CHEBI:30413"/>
    </ligand>
</feature>
<feature type="binding site" evidence="2 3">
    <location>
        <position position="80"/>
    </location>
    <ligand>
        <name>heme</name>
        <dbReference type="ChEBI" id="CHEBI:30413"/>
    </ligand>
</feature>
<feature type="binding site" evidence="2 3">
    <location>
        <position position="257"/>
    </location>
    <ligand>
        <name>heme</name>
        <dbReference type="ChEBI" id="CHEBI:30413"/>
    </ligand>
</feature>
<feature type="binding site" evidence="2 3">
    <location>
        <position position="259"/>
    </location>
    <ligand>
        <name>heme</name>
        <dbReference type="ChEBI" id="CHEBI:30413"/>
    </ligand>
</feature>
<feature type="binding site" evidence="2 3">
    <location>
        <position position="315"/>
    </location>
    <ligand>
        <name>heme</name>
        <dbReference type="ChEBI" id="CHEBI:30413"/>
    </ligand>
</feature>
<feature type="binding site" description="axial binding residue">
    <location>
        <position position="317"/>
    </location>
    <ligand>
        <name>heme</name>
        <dbReference type="ChEBI" id="CHEBI:30413"/>
    </ligand>
    <ligandPart>
        <name>Fe</name>
        <dbReference type="ChEBI" id="CHEBI:18248"/>
    </ligandPart>
</feature>
<feature type="mutagenesis site" description="1.4-fold reduction in styrene epoxidation activity. 13-fold increase in lauric acid hydroxylation activity." evidence="4">
    <original>D</original>
    <variation>R</variation>
    <location>
        <position position="77"/>
    </location>
</feature>
<feature type="mutagenesis site" description="1.2-fold reduction in styrene epoxidation activity. No effect on thermostability." evidence="1">
    <original>T</original>
    <variation>A</variation>
    <location>
        <position position="213"/>
    </location>
</feature>
<feature type="mutagenesis site" description="Loss of styrene epoxidation activity. No effect on thermostability." evidence="1">
    <original>T</original>
    <variation>F</variation>
    <location>
        <position position="213"/>
    </location>
</feature>
<feature type="mutagenesis site" description="5-fold reduction in styrene epoxidation activity. No effect on thermostability." evidence="1">
    <original>T</original>
    <variation>S</variation>
    <location>
        <position position="213"/>
    </location>
</feature>
<feature type="mutagenesis site" description="147-fold reduction in styrene epoxidation activity. No effect on thermostability." evidence="1">
    <original>T</original>
    <variation>V</variation>
    <location>
        <position position="213"/>
    </location>
</feature>
<feature type="mutagenesis site" description="19-fold reduction in styrene epoxidation activity. No effect on thermostability." evidence="1">
    <original>T</original>
    <variation>W</variation>
    <location>
        <position position="213"/>
    </location>
</feature>
<feature type="mutagenesis site" description="2.7-fold increase in styrene epoxidation activity. No effect on thermostability." evidence="1 4">
    <original>T</original>
    <variation>A</variation>
    <location>
        <position position="214"/>
    </location>
</feature>
<feature type="mutagenesis site" description="3-fold increase in styrene epoxidation activity. 6-fold increase in lauric acid hydroxylation activity. No effect on thermostability." evidence="1 4">
    <original>T</original>
    <variation>V</variation>
    <location>
        <position position="214"/>
    </location>
</feature>
<feature type="helix" evidence="10">
    <location>
        <begin position="2"/>
        <end position="11"/>
    </location>
</feature>
<feature type="strand" evidence="10">
    <location>
        <begin position="13"/>
        <end position="16"/>
    </location>
</feature>
<feature type="strand" evidence="10">
    <location>
        <begin position="21"/>
        <end position="23"/>
    </location>
</feature>
<feature type="helix" evidence="10">
    <location>
        <begin position="26"/>
        <end position="34"/>
    </location>
</feature>
<feature type="turn" evidence="10">
    <location>
        <begin position="36"/>
        <end position="38"/>
    </location>
</feature>
<feature type="strand" evidence="11">
    <location>
        <begin position="39"/>
        <end position="41"/>
    </location>
</feature>
<feature type="helix" evidence="10">
    <location>
        <begin position="46"/>
        <end position="53"/>
    </location>
</feature>
<feature type="turn" evidence="10">
    <location>
        <begin position="54"/>
        <end position="56"/>
    </location>
</feature>
<feature type="helix" evidence="10">
    <location>
        <begin position="63"/>
        <end position="65"/>
    </location>
</feature>
<feature type="helix" evidence="10">
    <location>
        <begin position="68"/>
        <end position="70"/>
    </location>
</feature>
<feature type="helix" evidence="10">
    <location>
        <begin position="75"/>
        <end position="80"/>
    </location>
</feature>
<feature type="helix" evidence="10">
    <location>
        <begin position="81"/>
        <end position="83"/>
    </location>
</feature>
<feature type="turn" evidence="10">
    <location>
        <begin position="84"/>
        <end position="87"/>
    </location>
</feature>
<feature type="helix" evidence="10">
    <location>
        <begin position="89"/>
        <end position="108"/>
    </location>
</feature>
<feature type="strand" evidence="10">
    <location>
        <begin position="114"/>
        <end position="116"/>
    </location>
</feature>
<feature type="helix" evidence="10">
    <location>
        <begin position="117"/>
        <end position="120"/>
    </location>
</feature>
<feature type="turn" evidence="10">
    <location>
        <begin position="121"/>
        <end position="123"/>
    </location>
</feature>
<feature type="helix" evidence="10">
    <location>
        <begin position="124"/>
        <end position="134"/>
    </location>
</feature>
<feature type="helix" evidence="10">
    <location>
        <begin position="138"/>
        <end position="140"/>
    </location>
</feature>
<feature type="helix" evidence="10">
    <location>
        <begin position="141"/>
        <end position="147"/>
    </location>
</feature>
<feature type="helix" evidence="10">
    <location>
        <begin position="148"/>
        <end position="150"/>
    </location>
</feature>
<feature type="turn" evidence="12">
    <location>
        <begin position="154"/>
        <end position="156"/>
    </location>
</feature>
<feature type="helix" evidence="10">
    <location>
        <begin position="161"/>
        <end position="178"/>
    </location>
</feature>
<feature type="helix" evidence="9">
    <location>
        <begin position="179"/>
        <end position="181"/>
    </location>
</feature>
<feature type="helix" evidence="10">
    <location>
        <begin position="184"/>
        <end position="190"/>
    </location>
</feature>
<feature type="strand" evidence="9">
    <location>
        <begin position="192"/>
        <end position="194"/>
    </location>
</feature>
<feature type="helix" evidence="10">
    <location>
        <begin position="196"/>
        <end position="208"/>
    </location>
</feature>
<feature type="helix" evidence="10">
    <location>
        <begin position="211"/>
        <end position="227"/>
    </location>
</feature>
<feature type="helix" evidence="10">
    <location>
        <begin position="231"/>
        <end position="237"/>
    </location>
</feature>
<feature type="helix" evidence="10">
    <location>
        <begin position="240"/>
        <end position="250"/>
    </location>
</feature>
<feature type="strand" evidence="10">
    <location>
        <begin position="257"/>
        <end position="263"/>
    </location>
</feature>
<feature type="strand" evidence="10">
    <location>
        <begin position="265"/>
        <end position="267"/>
    </location>
</feature>
<feature type="strand" evidence="10">
    <location>
        <begin position="270"/>
        <end position="272"/>
    </location>
</feature>
<feature type="strand" evidence="10">
    <location>
        <begin position="277"/>
        <end position="280"/>
    </location>
</feature>
<feature type="helix" evidence="10">
    <location>
        <begin position="282"/>
        <end position="285"/>
    </location>
</feature>
<feature type="turn" evidence="10">
    <location>
        <begin position="289"/>
        <end position="291"/>
    </location>
</feature>
<feature type="turn" evidence="10">
    <location>
        <begin position="293"/>
        <end position="296"/>
    </location>
</feature>
<feature type="helix" evidence="10">
    <location>
        <begin position="313"/>
        <end position="315"/>
    </location>
</feature>
<feature type="helix" evidence="10">
    <location>
        <begin position="320"/>
        <end position="335"/>
    </location>
</feature>
<feature type="strand" evidence="10">
    <location>
        <begin position="339"/>
        <end position="348"/>
    </location>
</feature>
<feature type="strand" evidence="10">
    <location>
        <begin position="352"/>
        <end position="354"/>
    </location>
</feature>
<feature type="strand" evidence="10">
    <location>
        <begin position="357"/>
        <end position="365"/>
    </location>
</feature>